<name>MPL_ECOLI</name>
<sequence length="457" mass="49874">MRIHILGICGTFMGGLAMLARQLGHEVTGSDANVYPPMSTLLEKQGIELIQGYDASQLEPQPDLVIIGNAMTRGNPCVEAVLEKNIPYMSGPQWLHDFVLRDRWVLAVAGTHGKTTTAGMATWILEQCGYKPGFVIGGVPGNFEVSAHLGESDFFVIEADEYDCAFFDKRSKFVHYCPRTLILNNLEFDHADIFDDLKAIQKQFHHLVRIVPGQGRIIWPENDINLKQTMAMGCWSEQELVGEQGHWQAKKLTTDASEWEVLLDGEKVGEVKWSLVGEHNMHNGLMAIAAARHVGVAPADAANALGSFINARRRLELRGEANGVTVYDDFAHHPTAILATLAALRGKVGGTARIIAVLEPRSNTMKMGICKDDLAPSLGRADEVFLLQPAHIPWQVAEVAEACVQPAHWSGDVDTLADMVVKTAQPGDHILVMSNGGFGGIHQKLLDGLAKKAEAAQ</sequence>
<keyword id="KW-0067">ATP-binding</keyword>
<keyword id="KW-0131">Cell cycle</keyword>
<keyword id="KW-0132">Cell division</keyword>
<keyword id="KW-0133">Cell shape</keyword>
<keyword id="KW-0961">Cell wall biogenesis/degradation</keyword>
<keyword id="KW-0436">Ligase</keyword>
<keyword id="KW-0460">Magnesium</keyword>
<keyword id="KW-0547">Nucleotide-binding</keyword>
<keyword id="KW-0573">Peptidoglycan synthesis</keyword>
<keyword id="KW-1185">Reference proteome</keyword>
<keyword id="KW-0964">Secreted</keyword>
<gene>
    <name evidence="1 4" type="primary">mpl</name>
    <name type="synonym">yjfG</name>
    <name type="ordered locus">b4233</name>
    <name type="ordered locus">JW4192</name>
</gene>
<protein>
    <recommendedName>
        <fullName evidence="1">UDP-N-acetylmuramate--L-alanyl-gamma-D-glutamyl-meso-2,6-diaminoheptandioate ligase</fullName>
        <ecNumber evidence="1 2">6.3.2.45</ecNumber>
    </recommendedName>
    <alternativeName>
        <fullName evidence="1">Murein peptide ligase</fullName>
    </alternativeName>
    <alternativeName>
        <fullName evidence="1">UDP-N-acetylmuramate:L-alanyl-gamma-D-glutamyl-meso-diaminopimelate ligase</fullName>
    </alternativeName>
</protein>
<organism>
    <name type="scientific">Escherichia coli (strain K12)</name>
    <dbReference type="NCBI Taxonomy" id="83333"/>
    <lineage>
        <taxon>Bacteria</taxon>
        <taxon>Pseudomonadati</taxon>
        <taxon>Pseudomonadota</taxon>
        <taxon>Gammaproteobacteria</taxon>
        <taxon>Enterobacterales</taxon>
        <taxon>Enterobacteriaceae</taxon>
        <taxon>Escherichia</taxon>
    </lineage>
</organism>
<comment type="function">
    <text evidence="2 3">Reutilizes the intact tripeptide L-alanyl-gamma-D-glutamyl-meso-diaminopimelate by linking it to UDP-N-acetylmuramate. The enzyme can also use the tetrapeptide L-alanyl-gamma-D-glutamyl-meso-2,6-diaminoheptanedioyl-D-alanine or the pentapeptide L-alanyl-gamma-D-glutamyl-meso-2,6-diaminoheptandioyl-D-alanyl-D-alanine in vivo and in vitro.</text>
</comment>
<comment type="catalytic activity">
    <reaction evidence="1 2">
        <text>UDP-N-acetyl-alpha-D-muramate + L-alanyl-gamma-D-glutamyl-meso-2,6-diaminopimelate + ATP = UDP-N-acetyl-alpha-D-muramoyl-L-alanyl-gamma-D-glutamyl-meso-2,6-diaminopimelate + ADP + phosphate + H(+)</text>
        <dbReference type="Rhea" id="RHEA:29563"/>
        <dbReference type="ChEBI" id="CHEBI:15378"/>
        <dbReference type="ChEBI" id="CHEBI:30616"/>
        <dbReference type="ChEBI" id="CHEBI:43474"/>
        <dbReference type="ChEBI" id="CHEBI:61401"/>
        <dbReference type="ChEBI" id="CHEBI:70757"/>
        <dbReference type="ChEBI" id="CHEBI:83905"/>
        <dbReference type="ChEBI" id="CHEBI:456216"/>
        <dbReference type="EC" id="6.3.2.45"/>
    </reaction>
</comment>
<comment type="cofactor">
    <cofactor evidence="1 2">
        <name>Mg(2+)</name>
        <dbReference type="ChEBI" id="CHEBI:18420"/>
    </cofactor>
</comment>
<comment type="biophysicochemical properties">
    <kinetics>
        <KM evidence="2">0.25 mM for UDP-N-acetyl-alpha-D-muramate</KM>
        <KM evidence="2">0.19 mM for ATP</KM>
        <KM evidence="2">0.1 mM for L-alanyl-gamma-D-glutamyl-meso-2,6-diaminoheptanedioate</KM>
        <Vmax evidence="2">5.8 umol/min/mg enzyme</Vmax>
        <text evidence="2">kcat is 290 min(-1).</text>
    </kinetics>
    <phDependence>
        <text evidence="2">Optimum pH is 8.4.</text>
    </phDependence>
</comment>
<comment type="pathway">
    <text evidence="1 3">Cell wall biogenesis; peptidoglycan recycling.</text>
</comment>
<comment type="interaction">
    <interactant intactId="EBI-562735">
        <id>P37773</id>
    </interactant>
    <interactant intactId="EBI-562735">
        <id>P37773</id>
        <label>mpl</label>
    </interactant>
    <organismsDiffer>false</organismsDiffer>
    <experiments>2</experiments>
</comment>
<comment type="subcellular location">
    <subcellularLocation>
        <location>Secreted</location>
    </subcellularLocation>
</comment>
<comment type="disruption phenotype">
    <text evidence="2 3">Enzyme ligase activity totally absent. No effect on growth.</text>
</comment>
<comment type="similarity">
    <text evidence="1 5">Belongs to the MurCDEF family. Mpl subfamily.</text>
</comment>
<reference key="1">
    <citation type="journal article" date="1995" name="Nucleic Acids Res.">
        <title>Analysis of the Escherichia coli genome VI: DNA sequence of the region from 92.8 through 100 minutes.</title>
        <authorList>
            <person name="Burland V.D."/>
            <person name="Plunkett G. III"/>
            <person name="Sofia H.J."/>
            <person name="Daniels D.L."/>
            <person name="Blattner F.R."/>
        </authorList>
    </citation>
    <scope>NUCLEOTIDE SEQUENCE [LARGE SCALE GENOMIC DNA]</scope>
    <source>
        <strain>K12 / MG1655 / ATCC 47076</strain>
    </source>
</reference>
<reference key="2">
    <citation type="journal article" date="1997" name="Science">
        <title>The complete genome sequence of Escherichia coli K-12.</title>
        <authorList>
            <person name="Blattner F.R."/>
            <person name="Plunkett G. III"/>
            <person name="Bloch C.A."/>
            <person name="Perna N.T."/>
            <person name="Burland V."/>
            <person name="Riley M."/>
            <person name="Collado-Vides J."/>
            <person name="Glasner J.D."/>
            <person name="Rode C.K."/>
            <person name="Mayhew G.F."/>
            <person name="Gregor J."/>
            <person name="Davis N.W."/>
            <person name="Kirkpatrick H.A."/>
            <person name="Goeden M.A."/>
            <person name="Rose D.J."/>
            <person name="Mau B."/>
            <person name="Shao Y."/>
        </authorList>
    </citation>
    <scope>NUCLEOTIDE SEQUENCE [LARGE SCALE GENOMIC DNA]</scope>
    <source>
        <strain>K12 / MG1655 / ATCC 47076</strain>
    </source>
</reference>
<reference key="3">
    <citation type="journal article" date="2006" name="Mol. Syst. Biol.">
        <title>Highly accurate genome sequences of Escherichia coli K-12 strains MG1655 and W3110.</title>
        <authorList>
            <person name="Hayashi K."/>
            <person name="Morooka N."/>
            <person name="Yamamoto Y."/>
            <person name="Fujita K."/>
            <person name="Isono K."/>
            <person name="Choi S."/>
            <person name="Ohtsubo E."/>
            <person name="Baba T."/>
            <person name="Wanner B.L."/>
            <person name="Mori H."/>
            <person name="Horiuchi T."/>
        </authorList>
    </citation>
    <scope>NUCLEOTIDE SEQUENCE [LARGE SCALE GENOMIC DNA]</scope>
    <source>
        <strain>K12 / W3110 / ATCC 27325 / DSM 5911</strain>
    </source>
</reference>
<reference key="4">
    <citation type="journal article" date="1988" name="Nucleic Acids Res.">
        <title>Sequence of the Escherichia coli fructose-1,6-bisphosphatase gene.</title>
        <authorList>
            <person name="Hamilton W.D.O."/>
            <person name="Harrison D.A."/>
            <person name="Dyer T.A."/>
        </authorList>
    </citation>
    <scope>NUCLEOTIDE SEQUENCE [GENOMIC DNA] OF 1-64</scope>
</reference>
<reference key="5">
    <citation type="journal article" date="1994" name="Nucleic Acids Res.">
        <title>Intrinsic and extrinsic approaches for detecting genes in a bacterial genome.</title>
        <authorList>
            <person name="Borodovsky M."/>
            <person name="Rudd K.E."/>
            <person name="Koonin E.V."/>
        </authorList>
    </citation>
    <scope>IDENTIFICATION</scope>
</reference>
<reference key="6">
    <citation type="journal article" date="1996" name="J. Bacteriol.">
        <title>Identification of the mpl gene encoding UDP-N-acetylmuramate: L-alanyl-gamma-D-glutamyl-meso-diaminopimelate ligase in Escherichia coli and its role in recycling of cell wall peptidoglycan.</title>
        <authorList>
            <person name="Mengin-Lecreulx D."/>
            <person name="van Heijenoort J."/>
            <person name="Park J.T."/>
        </authorList>
    </citation>
    <scope>FUNCTION</scope>
    <scope>DISRUPTION PHENOTYPE</scope>
    <scope>PATHWAY</scope>
    <scope>CHARACTERIZATION</scope>
    <source>
        <strain>K12 / K10</strain>
    </source>
</reference>
<reference key="7">
    <citation type="journal article" date="2007" name="J. Bacteriol.">
        <title>Biochemical characterization and physiological properties of Escherichia coli UDP-N-acetylmuramate:L-alanyl-gamma-D-glutamyl-meso-diaminopimelate ligase.</title>
        <authorList>
            <person name="Herve M."/>
            <person name="Boniface A."/>
            <person name="Gobec S."/>
            <person name="Blanot D."/>
            <person name="Mengin-Lecreulx D."/>
        </authorList>
    </citation>
    <scope>FUNCTION</scope>
    <scope>CATALYTIC ACTIVITY</scope>
    <scope>BIOPHYSICOCHEMICAL PROPERTIES</scope>
    <scope>COFACTOR</scope>
    <scope>DISRUPTION PHENOTYPE</scope>
    <scope>SUBSTRATE SPECIFICITY</scope>
</reference>
<feature type="chain" id="PRO_0000101708" description="UDP-N-acetylmuramate--L-alanyl-gamma-D-glutamyl-meso-2,6-diaminoheptandioate ligase">
    <location>
        <begin position="1"/>
        <end position="457"/>
    </location>
</feature>
<feature type="binding site" evidence="1">
    <location>
        <begin position="110"/>
        <end position="116"/>
    </location>
    <ligand>
        <name>ATP</name>
        <dbReference type="ChEBI" id="CHEBI:30616"/>
    </ligand>
</feature>
<evidence type="ECO:0000255" key="1">
    <source>
        <dbReference type="HAMAP-Rule" id="MF_02020"/>
    </source>
</evidence>
<evidence type="ECO:0000269" key="2">
    <source>
    </source>
</evidence>
<evidence type="ECO:0000269" key="3">
    <source>
    </source>
</evidence>
<evidence type="ECO:0000303" key="4">
    <source>
    </source>
</evidence>
<evidence type="ECO:0000305" key="5"/>
<proteinExistence type="evidence at protein level"/>
<accession>P37773</accession>
<accession>P76804</accession>
<accession>Q2M673</accession>
<dbReference type="EC" id="6.3.2.45" evidence="1 2"/>
<dbReference type="EMBL" id="U14003">
    <property type="protein sequence ID" value="AAA97130.1"/>
    <property type="molecule type" value="Genomic_DNA"/>
</dbReference>
<dbReference type="EMBL" id="U00096">
    <property type="protein sequence ID" value="AAC77190.1"/>
    <property type="molecule type" value="Genomic_DNA"/>
</dbReference>
<dbReference type="EMBL" id="AP009048">
    <property type="protein sequence ID" value="BAE78233.1"/>
    <property type="molecule type" value="Genomic_DNA"/>
</dbReference>
<dbReference type="EMBL" id="X12545">
    <property type="status" value="NOT_ANNOTATED_CDS"/>
    <property type="molecule type" value="mRNA"/>
</dbReference>
<dbReference type="PIR" id="S56459">
    <property type="entry name" value="S56459"/>
</dbReference>
<dbReference type="RefSeq" id="NP_418654.1">
    <property type="nucleotide sequence ID" value="NC_000913.3"/>
</dbReference>
<dbReference type="RefSeq" id="WP_001219813.1">
    <property type="nucleotide sequence ID" value="NZ_LN832404.1"/>
</dbReference>
<dbReference type="SMR" id="P37773"/>
<dbReference type="BioGRID" id="4259323">
    <property type="interactions" value="201"/>
</dbReference>
<dbReference type="BioGRID" id="853041">
    <property type="interactions" value="4"/>
</dbReference>
<dbReference type="DIP" id="DIP-10246N"/>
<dbReference type="FunCoup" id="P37773">
    <property type="interactions" value="217"/>
</dbReference>
<dbReference type="IntAct" id="P37773">
    <property type="interactions" value="7"/>
</dbReference>
<dbReference type="STRING" id="511145.b4233"/>
<dbReference type="jPOST" id="P37773"/>
<dbReference type="PaxDb" id="511145-b4233"/>
<dbReference type="EnsemblBacteria" id="AAC77190">
    <property type="protein sequence ID" value="AAC77190"/>
    <property type="gene ID" value="b4233"/>
</dbReference>
<dbReference type="GeneID" id="948752"/>
<dbReference type="KEGG" id="ecj:JW4192"/>
<dbReference type="KEGG" id="eco:b4233"/>
<dbReference type="KEGG" id="ecoc:C3026_22850"/>
<dbReference type="PATRIC" id="fig|1411691.4.peg.2469"/>
<dbReference type="EchoBASE" id="EB2335"/>
<dbReference type="eggNOG" id="COG0773">
    <property type="taxonomic scope" value="Bacteria"/>
</dbReference>
<dbReference type="HOGENOM" id="CLU_028104_0_1_6"/>
<dbReference type="InParanoid" id="P37773"/>
<dbReference type="OMA" id="SGIAWDH"/>
<dbReference type="OrthoDB" id="9804126at2"/>
<dbReference type="PhylomeDB" id="P37773"/>
<dbReference type="BioCyc" id="EcoCyc:EG12440-MONOMER"/>
<dbReference type="BioCyc" id="MetaCyc:EG12440-MONOMER"/>
<dbReference type="BRENDA" id="6.3.2.45">
    <property type="organism ID" value="2026"/>
</dbReference>
<dbReference type="UniPathway" id="UPA00544"/>
<dbReference type="PRO" id="PR:P37773"/>
<dbReference type="Proteomes" id="UP000000625">
    <property type="component" value="Chromosome"/>
</dbReference>
<dbReference type="GO" id="GO:0005737">
    <property type="term" value="C:cytoplasm"/>
    <property type="evidence" value="ECO:0000314"/>
    <property type="project" value="EcoliWiki"/>
</dbReference>
<dbReference type="GO" id="GO:0005576">
    <property type="term" value="C:extracellular region"/>
    <property type="evidence" value="ECO:0007669"/>
    <property type="project" value="UniProtKB-SubCell"/>
</dbReference>
<dbReference type="GO" id="GO:0005524">
    <property type="term" value="F:ATP binding"/>
    <property type="evidence" value="ECO:0007669"/>
    <property type="project" value="UniProtKB-UniRule"/>
</dbReference>
<dbReference type="GO" id="GO:0097216">
    <property type="term" value="F:guanosine tetraphosphate binding"/>
    <property type="evidence" value="ECO:0000314"/>
    <property type="project" value="EcoCyc"/>
</dbReference>
<dbReference type="GO" id="GO:0042802">
    <property type="term" value="F:identical protein binding"/>
    <property type="evidence" value="ECO:0000353"/>
    <property type="project" value="IntAct"/>
</dbReference>
<dbReference type="GO" id="GO:0106418">
    <property type="term" value="F:UDP-N-acetylmuramate-L-alanyl-gamma-D-glutamyl-meso-2,6-diaminoheptanedioate ligase activity"/>
    <property type="evidence" value="ECO:0000314"/>
    <property type="project" value="EcoCyc"/>
</dbReference>
<dbReference type="GO" id="GO:0051301">
    <property type="term" value="P:cell division"/>
    <property type="evidence" value="ECO:0007669"/>
    <property type="project" value="UniProtKB-KW"/>
</dbReference>
<dbReference type="GO" id="GO:0071555">
    <property type="term" value="P:cell wall organization"/>
    <property type="evidence" value="ECO:0007669"/>
    <property type="project" value="UniProtKB-KW"/>
</dbReference>
<dbReference type="GO" id="GO:0009252">
    <property type="term" value="P:peptidoglycan biosynthetic process"/>
    <property type="evidence" value="ECO:0007669"/>
    <property type="project" value="UniProtKB-KW"/>
</dbReference>
<dbReference type="GO" id="GO:0009254">
    <property type="term" value="P:peptidoglycan turnover"/>
    <property type="evidence" value="ECO:0000315"/>
    <property type="project" value="EcoCyc"/>
</dbReference>
<dbReference type="GO" id="GO:0008360">
    <property type="term" value="P:regulation of cell shape"/>
    <property type="evidence" value="ECO:0007669"/>
    <property type="project" value="UniProtKB-KW"/>
</dbReference>
<dbReference type="FunFam" id="3.40.1190.10:FF:000003">
    <property type="entry name" value="UDP-N-acetylmuramate--L-alanyl-gamma-D-glutamyl-meso-2,6-diaminoheptandioate ligase"/>
    <property type="match status" value="1"/>
</dbReference>
<dbReference type="FunFam" id="3.40.50.720:FF:000161">
    <property type="entry name" value="UDP-N-acetylmuramate--L-alanyl-gamma-D-glutamyl-meso-2,6-diaminoheptandioate ligase"/>
    <property type="match status" value="1"/>
</dbReference>
<dbReference type="FunFam" id="3.90.190.20:FF:000002">
    <property type="entry name" value="UDP-N-acetylmuramate--L-alanyl-gamma-D-glutamyl-meso-2,6-diaminoheptandioate ligase"/>
    <property type="match status" value="1"/>
</dbReference>
<dbReference type="Gene3D" id="3.90.190.20">
    <property type="entry name" value="Mur ligase, C-terminal domain"/>
    <property type="match status" value="1"/>
</dbReference>
<dbReference type="Gene3D" id="3.40.1190.10">
    <property type="entry name" value="Mur-like, catalytic domain"/>
    <property type="match status" value="1"/>
</dbReference>
<dbReference type="Gene3D" id="3.40.50.720">
    <property type="entry name" value="NAD(P)-binding Rossmann-like Domain"/>
    <property type="match status" value="1"/>
</dbReference>
<dbReference type="HAMAP" id="MF_02020">
    <property type="entry name" value="Mpl"/>
    <property type="match status" value="1"/>
</dbReference>
<dbReference type="InterPro" id="IPR005757">
    <property type="entry name" value="Mpl"/>
</dbReference>
<dbReference type="InterPro" id="IPR036565">
    <property type="entry name" value="Mur-like_cat_sf"/>
</dbReference>
<dbReference type="InterPro" id="IPR004101">
    <property type="entry name" value="Mur_ligase_C"/>
</dbReference>
<dbReference type="InterPro" id="IPR036615">
    <property type="entry name" value="Mur_ligase_C_dom_sf"/>
</dbReference>
<dbReference type="InterPro" id="IPR013221">
    <property type="entry name" value="Mur_ligase_cen"/>
</dbReference>
<dbReference type="InterPro" id="IPR000713">
    <property type="entry name" value="Mur_ligase_N"/>
</dbReference>
<dbReference type="InterPro" id="IPR050061">
    <property type="entry name" value="MurCDEF_pg_biosynth"/>
</dbReference>
<dbReference type="NCBIfam" id="TIGR01081">
    <property type="entry name" value="mpl"/>
    <property type="match status" value="1"/>
</dbReference>
<dbReference type="PANTHER" id="PTHR43445">
    <property type="entry name" value="UDP-N-ACETYLMURAMATE--L-ALANINE LIGASE-RELATED"/>
    <property type="match status" value="1"/>
</dbReference>
<dbReference type="PANTHER" id="PTHR43445:SF5">
    <property type="entry name" value="UDP-N-ACETYLMURAMATE--L-ALANYL-GAMMA-D-GLUTAMYL-MESO-2,6-DIAMINOHEPTANDIOATE LIGASE"/>
    <property type="match status" value="1"/>
</dbReference>
<dbReference type="Pfam" id="PF01225">
    <property type="entry name" value="Mur_ligase"/>
    <property type="match status" value="1"/>
</dbReference>
<dbReference type="Pfam" id="PF02875">
    <property type="entry name" value="Mur_ligase_C"/>
    <property type="match status" value="1"/>
</dbReference>
<dbReference type="Pfam" id="PF08245">
    <property type="entry name" value="Mur_ligase_M"/>
    <property type="match status" value="1"/>
</dbReference>
<dbReference type="SUPFAM" id="SSF51984">
    <property type="entry name" value="MurCD N-terminal domain"/>
    <property type="match status" value="1"/>
</dbReference>
<dbReference type="SUPFAM" id="SSF53623">
    <property type="entry name" value="MurD-like peptide ligases, catalytic domain"/>
    <property type="match status" value="1"/>
</dbReference>
<dbReference type="SUPFAM" id="SSF53244">
    <property type="entry name" value="MurD-like peptide ligases, peptide-binding domain"/>
    <property type="match status" value="1"/>
</dbReference>